<dbReference type="EMBL" id="AY916449">
    <property type="protein sequence ID" value="AAW82516.1"/>
    <property type="molecule type" value="Genomic_DNA"/>
</dbReference>
<dbReference type="RefSeq" id="YP_358594.1">
    <property type="nucleotide sequence ID" value="NC_007499.1"/>
</dbReference>
<dbReference type="SMR" id="Q3BAM4"/>
<dbReference type="GeneID" id="3741695"/>
<dbReference type="GO" id="GO:0009535">
    <property type="term" value="C:chloroplast thylakoid membrane"/>
    <property type="evidence" value="ECO:0007669"/>
    <property type="project" value="UniProtKB-SubCell"/>
</dbReference>
<dbReference type="GO" id="GO:0009539">
    <property type="term" value="C:photosystem II reaction center"/>
    <property type="evidence" value="ECO:0007669"/>
    <property type="project" value="InterPro"/>
</dbReference>
<dbReference type="GO" id="GO:0009055">
    <property type="term" value="F:electron transfer activity"/>
    <property type="evidence" value="ECO:0007669"/>
    <property type="project" value="UniProtKB-UniRule"/>
</dbReference>
<dbReference type="GO" id="GO:0020037">
    <property type="term" value="F:heme binding"/>
    <property type="evidence" value="ECO:0007669"/>
    <property type="project" value="InterPro"/>
</dbReference>
<dbReference type="GO" id="GO:0005506">
    <property type="term" value="F:iron ion binding"/>
    <property type="evidence" value="ECO:0007669"/>
    <property type="project" value="UniProtKB-UniRule"/>
</dbReference>
<dbReference type="GO" id="GO:0009767">
    <property type="term" value="P:photosynthetic electron transport chain"/>
    <property type="evidence" value="ECO:0007669"/>
    <property type="project" value="InterPro"/>
</dbReference>
<dbReference type="HAMAP" id="MF_00643">
    <property type="entry name" value="PSII_PsbF"/>
    <property type="match status" value="1"/>
</dbReference>
<dbReference type="InterPro" id="IPR006241">
    <property type="entry name" value="PSII_cyt_b559_bsu"/>
</dbReference>
<dbReference type="InterPro" id="IPR006216">
    <property type="entry name" value="PSII_cyt_b559_CS"/>
</dbReference>
<dbReference type="InterPro" id="IPR013081">
    <property type="entry name" value="PSII_cyt_b559_N"/>
</dbReference>
<dbReference type="NCBIfam" id="TIGR01333">
    <property type="entry name" value="cyt_b559_beta"/>
    <property type="match status" value="1"/>
</dbReference>
<dbReference type="Pfam" id="PF00283">
    <property type="entry name" value="Cytochrom_B559"/>
    <property type="match status" value="1"/>
</dbReference>
<dbReference type="PIRSF" id="PIRSF000037">
    <property type="entry name" value="PsbF"/>
    <property type="match status" value="1"/>
</dbReference>
<dbReference type="SUPFAM" id="SSF161045">
    <property type="entry name" value="Cytochrome b559 subunits"/>
    <property type="match status" value="1"/>
</dbReference>
<dbReference type="PROSITE" id="PS00537">
    <property type="entry name" value="CYTOCHROME_B559"/>
    <property type="match status" value="1"/>
</dbReference>
<evidence type="ECO:0000255" key="1">
    <source>
        <dbReference type="HAMAP-Rule" id="MF_00643"/>
    </source>
</evidence>
<comment type="function">
    <text evidence="1">This b-type cytochrome is tightly associated with the reaction center of photosystem II (PSII). PSII is a light-driven water:plastoquinone oxidoreductase that uses light energy to abstract electrons from H(2)O, generating O(2) and a proton gradient subsequently used for ATP formation. It consists of a core antenna complex that captures photons, and an electron transfer chain that converts photonic excitation into a charge separation.</text>
</comment>
<comment type="cofactor">
    <cofactor evidence="1">
        <name>heme b</name>
        <dbReference type="ChEBI" id="CHEBI:60344"/>
    </cofactor>
    <text evidence="1">With its partner (PsbE) binds heme. PSII binds additional chlorophylls, carotenoids and specific lipids.</text>
</comment>
<comment type="subunit">
    <text evidence="1">Heterodimer of an alpha subunit and a beta subunit. PSII is composed of 1 copy each of membrane proteins PsbA, PsbB, PsbC, PsbD, PsbE, PsbF, PsbH, PsbI, PsbJ, PsbK, PsbL, PsbM, PsbT, PsbX, PsbY, PsbZ, Psb30/Ycf12, at least 3 peripheral proteins of the oxygen-evolving complex and a large number of cofactors. It forms dimeric complexes.</text>
</comment>
<comment type="subcellular location">
    <subcellularLocation>
        <location evidence="1">Plastid</location>
        <location evidence="1">Chloroplast thylakoid membrane</location>
        <topology evidence="1">Single-pass membrane protein</topology>
    </subcellularLocation>
</comment>
<comment type="similarity">
    <text evidence="1">Belongs to the PsbE/PsbF family.</text>
</comment>
<geneLocation type="chloroplast"/>
<gene>
    <name evidence="1" type="primary">psbF</name>
</gene>
<name>PSBF_PHAAO</name>
<keyword id="KW-0150">Chloroplast</keyword>
<keyword id="KW-0249">Electron transport</keyword>
<keyword id="KW-0349">Heme</keyword>
<keyword id="KW-0408">Iron</keyword>
<keyword id="KW-0472">Membrane</keyword>
<keyword id="KW-0479">Metal-binding</keyword>
<keyword id="KW-0602">Photosynthesis</keyword>
<keyword id="KW-0604">Photosystem II</keyword>
<keyword id="KW-0934">Plastid</keyword>
<keyword id="KW-0793">Thylakoid</keyword>
<keyword id="KW-0812">Transmembrane</keyword>
<keyword id="KW-1133">Transmembrane helix</keyword>
<keyword id="KW-0813">Transport</keyword>
<feature type="chain" id="PRO_0000233647" description="Cytochrome b559 subunit beta">
    <location>
        <begin position="1"/>
        <end position="39"/>
    </location>
</feature>
<feature type="transmembrane region" description="Helical" evidence="1">
    <location>
        <begin position="14"/>
        <end position="30"/>
    </location>
</feature>
<feature type="binding site" description="axial binding residue" evidence="1">
    <location>
        <position position="18"/>
    </location>
    <ligand>
        <name>heme</name>
        <dbReference type="ChEBI" id="CHEBI:30413"/>
        <note>ligand shared with alpha subunit</note>
    </ligand>
    <ligandPart>
        <name>Fe</name>
        <dbReference type="ChEBI" id="CHEBI:18248"/>
    </ligandPart>
</feature>
<accession>Q3BAM4</accession>
<sequence>MTIDRTYPIFTVRWLAVHGLAVPTVSFLGSISAMQFIQR</sequence>
<reference key="1">
    <citation type="journal article" date="2006" name="Mol. Biol. Evol.">
        <title>The chloroplast genome of Phalaenopsis aphrodite (Orchidaceae): comparative analysis of evolutionary rate with that of grasses and its phylogenetic implications.</title>
        <authorList>
            <person name="Chang C.-C."/>
            <person name="Lin H.-C."/>
            <person name="Lin I.-P."/>
            <person name="Chow T.-Y."/>
            <person name="Chen H.-H."/>
            <person name="Chen W.-H."/>
            <person name="Cheng C.-H."/>
            <person name="Lin C.-Y."/>
            <person name="Liu S.-M."/>
            <person name="Chang C.-C."/>
            <person name="Chaw S.-M."/>
        </authorList>
    </citation>
    <scope>NUCLEOTIDE SEQUENCE [LARGE SCALE GENOMIC DNA]</scope>
    <source>
        <strain>cv. Taisugar TS-97</strain>
    </source>
</reference>
<organism>
    <name type="scientific">Phalaenopsis aphrodite subsp. formosana</name>
    <name type="common">Moth orchid</name>
    <dbReference type="NCBI Taxonomy" id="308872"/>
    <lineage>
        <taxon>Eukaryota</taxon>
        <taxon>Viridiplantae</taxon>
        <taxon>Streptophyta</taxon>
        <taxon>Embryophyta</taxon>
        <taxon>Tracheophyta</taxon>
        <taxon>Spermatophyta</taxon>
        <taxon>Magnoliopsida</taxon>
        <taxon>Liliopsida</taxon>
        <taxon>Asparagales</taxon>
        <taxon>Orchidaceae</taxon>
        <taxon>Epidendroideae</taxon>
        <taxon>Vandeae</taxon>
        <taxon>Aeridinae</taxon>
        <taxon>Phalaenopsis</taxon>
    </lineage>
</organism>
<protein>
    <recommendedName>
        <fullName evidence="1">Cytochrome b559 subunit beta</fullName>
    </recommendedName>
    <alternativeName>
        <fullName evidence="1">PSII reaction center subunit VI</fullName>
    </alternativeName>
</protein>
<proteinExistence type="inferred from homology"/>